<sequence>MGKEVRQQLEQQLKQRILLIDGGMGTMIQSYKLQEEDYRGARFVDWHCDLKGNNDLLVLTQPQIIKEIHSAYLEAGADILETNTFNSTTIAMADYDMQSLSAEINFAAAKLAREVADEWTAKDPSRPRYVAGVLGPTNRTCSISPDVNDPGFRNVTFDGLVEAYSESTRALIKGGSDLILIETIFDTLNAKACAFAVDSVFEELGISLPVMISGTITDASGRTLSGQTTEAFYNALRHVRPISFGLNCALGPDELRQYVEELSRISECYVSAHPNAGLPNAFGEYDLSAEEMAEHIAEWAQAGFLNLVGGCCGTTPEHIAAIAKAVEGVKPRALPDLKVECRLSGLEPLNIGPETLFVNVGERTNVTGSARFKRLIKEEQYDEALDVAREQVENGAQIIDINMDEGMLDAEACMVRFLNLCASEPEISKVPVMVDSSKWEVIEAGLKCIQGKGIVNSISLKEGKEKFIAQAKLVRRYGAAVIVMAFDEVGQADTRERKLEICRRAYHILVDEVGFPPEDIIFDPNIFAVATGIDEHNNYALDFINAVADIKRELPHAMISGGVSNVSFSFRGNNYVREAIHAVFLYHCFKHGMDMGIVNAGQLEIYDNVPLKLREAVEDVILNRRSDGTERLLEIAEAYRENSVGKEEDASALEWRAWPVAKRLEHALVKGITEFIVQDTEEARQQASKPLEVIEGPLMDGMNVVGDLFGEGKMFLPQVVKSARVMKQAVAYLEPFINAQKSGSTSNGKILLATVKGDVHDIGKNIVGVVLQCNNFEIIDLGVMVPCEQILKVAREQNVDIIGLSGLITPSLDEMVHVAKEMERQGFELPLLIGGATTSKAHTAVKIEQNYHAPVVYVNNASRAVGVCTSLLSDEQRPGFIERLDLDYERTRDQHARKTPKSRPVTLEQARANKAALDWANYTPPAPAKPGVHVFENIALATLRPYIDWTPFFMTWSLMGKYPAILEHEEVGEEAKRLFHDANALLDKVEREGLLKASGMCALFPAASVGDDIEVYSDESRTQVAHVLYNLRQQTEKPKGANYCLSDYVAPKESGKRDWIGAFAVTGGIGERALADAYKAQGDDYNAIMIQAVADRLAEAFAEYLHEKVRKEIWGYASDENLSNDDLIRERYQGIRPAPGYPACPEHTEKATLWQMLNVEETIGMSLTTSYAMWPGASVSGWYFSHPDSRYFAVAQIQPDQLHSYAERKGWRLEEAEKWLAPNLDA</sequence>
<reference key="1">
    <citation type="journal article" date="2000" name="Nature">
        <title>DNA sequence of both chromosomes of the cholera pathogen Vibrio cholerae.</title>
        <authorList>
            <person name="Heidelberg J.F."/>
            <person name="Eisen J.A."/>
            <person name="Nelson W.C."/>
            <person name="Clayton R.A."/>
            <person name="Gwinn M.L."/>
            <person name="Dodson R.J."/>
            <person name="Haft D.H."/>
            <person name="Hickey E.K."/>
            <person name="Peterson J.D."/>
            <person name="Umayam L.A."/>
            <person name="Gill S.R."/>
            <person name="Nelson K.E."/>
            <person name="Read T.D."/>
            <person name="Tettelin H."/>
            <person name="Richardson D.L."/>
            <person name="Ermolaeva M.D."/>
            <person name="Vamathevan J.J."/>
            <person name="Bass S."/>
            <person name="Qin H."/>
            <person name="Dragoi I."/>
            <person name="Sellers P."/>
            <person name="McDonald L.A."/>
            <person name="Utterback T.R."/>
            <person name="Fleischmann R.D."/>
            <person name="Nierman W.C."/>
            <person name="White O."/>
            <person name="Salzberg S.L."/>
            <person name="Smith H.O."/>
            <person name="Colwell R.R."/>
            <person name="Mekalanos J.J."/>
            <person name="Venter J.C."/>
            <person name="Fraser C.M."/>
        </authorList>
    </citation>
    <scope>NUCLEOTIDE SEQUENCE [LARGE SCALE GENOMIC DNA]</scope>
    <source>
        <strain>ATCC 39315 / El Tor Inaba N16961</strain>
    </source>
</reference>
<protein>
    <recommendedName>
        <fullName>Methionine synthase</fullName>
        <ecNumber>2.1.1.13</ecNumber>
    </recommendedName>
    <alternativeName>
        <fullName>5-methyltetrahydrofolate--homocysteine methyltransferase</fullName>
    </alternativeName>
    <alternativeName>
        <fullName>Methionine synthase, vitamin-B12 dependent</fullName>
        <shortName>MS</shortName>
    </alternativeName>
</protein>
<proteinExistence type="inferred from homology"/>
<comment type="function">
    <text evidence="1">Catalyzes the transfer of a methyl group from methyl-cobalamin to homocysteine, yielding enzyme-bound cob(I)alamin and methionine. Subsequently, remethylates the cofactor using methyltetrahydrofolate (By similarity).</text>
</comment>
<comment type="catalytic activity">
    <reaction>
        <text>(6S)-5-methyl-5,6,7,8-tetrahydrofolate + L-homocysteine = (6S)-5,6,7,8-tetrahydrofolate + L-methionine</text>
        <dbReference type="Rhea" id="RHEA:11172"/>
        <dbReference type="ChEBI" id="CHEBI:18608"/>
        <dbReference type="ChEBI" id="CHEBI:57453"/>
        <dbReference type="ChEBI" id="CHEBI:57844"/>
        <dbReference type="ChEBI" id="CHEBI:58199"/>
        <dbReference type="EC" id="2.1.1.13"/>
    </reaction>
</comment>
<comment type="cofactor">
    <cofactor evidence="1">
        <name>methylcob(III)alamin</name>
        <dbReference type="ChEBI" id="CHEBI:28115"/>
    </cofactor>
</comment>
<comment type="cofactor">
    <cofactor evidence="1">
        <name>Zn(2+)</name>
        <dbReference type="ChEBI" id="CHEBI:29105"/>
    </cofactor>
    <text evidence="1">Binds 1 zinc ion per subunit.</text>
</comment>
<comment type="pathway">
    <text>Amino-acid biosynthesis; L-methionine biosynthesis via de novo pathway; L-methionine from L-homocysteine (MetH route): step 1/1.</text>
</comment>
<comment type="domain">
    <text evidence="1">Modular enzyme with four functionally distinct domains. The isolated Hcy-binding domain catalyzes methyl transfer from free methylcobalamin to homocysteine. The Hcy-binding domain in association with the pterin-binding domain catalyzes the methylation of cob(I)alamin by methyltetrahydrofolate and the methylation of homocysteine. The B12-binding domain binds the cofactor. The AdoMet activation domain binds S-adenosyl-L-methionine. Under aerobic conditions cob(I)alamin can be converted to inactive cob(II)alamin. Reductive methylation by S-adenosyl-L-methionine and flavodoxin regenerates methylcobalamin (By similarity).</text>
</comment>
<comment type="miscellaneous">
    <text evidence="1">L-homocysteine is bound via the zinc atom.</text>
</comment>
<comment type="similarity">
    <text evidence="8">Belongs to the vitamin-B12 dependent methionine synthase family.</text>
</comment>
<accession>Q9KUW9</accession>
<keyword id="KW-0028">Amino-acid biosynthesis</keyword>
<keyword id="KW-0846">Cobalamin</keyword>
<keyword id="KW-0170">Cobalt</keyword>
<keyword id="KW-0479">Metal-binding</keyword>
<keyword id="KW-0486">Methionine biosynthesis</keyword>
<keyword id="KW-0489">Methyltransferase</keyword>
<keyword id="KW-1185">Reference proteome</keyword>
<keyword id="KW-0677">Repeat</keyword>
<keyword id="KW-0949">S-adenosyl-L-methionine</keyword>
<keyword id="KW-0808">Transferase</keyword>
<keyword id="KW-0862">Zinc</keyword>
<organism>
    <name type="scientific">Vibrio cholerae serotype O1 (strain ATCC 39315 / El Tor Inaba N16961)</name>
    <dbReference type="NCBI Taxonomy" id="243277"/>
    <lineage>
        <taxon>Bacteria</taxon>
        <taxon>Pseudomonadati</taxon>
        <taxon>Pseudomonadota</taxon>
        <taxon>Gammaproteobacteria</taxon>
        <taxon>Vibrionales</taxon>
        <taxon>Vibrionaceae</taxon>
        <taxon>Vibrio</taxon>
    </lineage>
</organism>
<gene>
    <name type="primary">metH</name>
    <name type="ordered locus">VC_0390</name>
</gene>
<dbReference type="EC" id="2.1.1.13"/>
<dbReference type="EMBL" id="AE003852">
    <property type="protein sequence ID" value="AAF93563.1"/>
    <property type="molecule type" value="Genomic_DNA"/>
</dbReference>
<dbReference type="PIR" id="E82328">
    <property type="entry name" value="E82328"/>
</dbReference>
<dbReference type="RefSeq" id="NP_230044.1">
    <property type="nucleotide sequence ID" value="NC_002505.1"/>
</dbReference>
<dbReference type="RefSeq" id="WP_000514261.1">
    <property type="nucleotide sequence ID" value="NZ_LT906614.1"/>
</dbReference>
<dbReference type="SMR" id="Q9KUW9"/>
<dbReference type="STRING" id="243277.VC_0390"/>
<dbReference type="DNASU" id="2614987"/>
<dbReference type="EnsemblBacteria" id="AAF93563">
    <property type="protein sequence ID" value="AAF93563"/>
    <property type="gene ID" value="VC_0390"/>
</dbReference>
<dbReference type="KEGG" id="vch:VC_0390"/>
<dbReference type="PATRIC" id="fig|243277.26.peg.365"/>
<dbReference type="eggNOG" id="COG0646">
    <property type="taxonomic scope" value="Bacteria"/>
</dbReference>
<dbReference type="eggNOG" id="COG1410">
    <property type="taxonomic scope" value="Bacteria"/>
</dbReference>
<dbReference type="HOGENOM" id="CLU_004914_2_2_6"/>
<dbReference type="UniPathway" id="UPA00051">
    <property type="reaction ID" value="UER00081"/>
</dbReference>
<dbReference type="Proteomes" id="UP000000584">
    <property type="component" value="Chromosome 1"/>
</dbReference>
<dbReference type="GO" id="GO:0005829">
    <property type="term" value="C:cytosol"/>
    <property type="evidence" value="ECO:0000318"/>
    <property type="project" value="GO_Central"/>
</dbReference>
<dbReference type="GO" id="GO:0031419">
    <property type="term" value="F:cobalamin binding"/>
    <property type="evidence" value="ECO:0007669"/>
    <property type="project" value="UniProtKB-KW"/>
</dbReference>
<dbReference type="GO" id="GO:0008705">
    <property type="term" value="F:methionine synthase activity"/>
    <property type="evidence" value="ECO:0000318"/>
    <property type="project" value="GO_Central"/>
</dbReference>
<dbReference type="GO" id="GO:0008270">
    <property type="term" value="F:zinc ion binding"/>
    <property type="evidence" value="ECO:0007669"/>
    <property type="project" value="InterPro"/>
</dbReference>
<dbReference type="GO" id="GO:0050667">
    <property type="term" value="P:homocysteine metabolic process"/>
    <property type="evidence" value="ECO:0000318"/>
    <property type="project" value="GO_Central"/>
</dbReference>
<dbReference type="GO" id="GO:0009086">
    <property type="term" value="P:methionine biosynthetic process"/>
    <property type="evidence" value="ECO:0000318"/>
    <property type="project" value="GO_Central"/>
</dbReference>
<dbReference type="GO" id="GO:0032259">
    <property type="term" value="P:methylation"/>
    <property type="evidence" value="ECO:0007669"/>
    <property type="project" value="UniProtKB-KW"/>
</dbReference>
<dbReference type="GO" id="GO:0046653">
    <property type="term" value="P:tetrahydrofolate metabolic process"/>
    <property type="evidence" value="ECO:0000318"/>
    <property type="project" value="GO_Central"/>
</dbReference>
<dbReference type="CDD" id="cd02069">
    <property type="entry name" value="methionine_synthase_B12_BD"/>
    <property type="match status" value="1"/>
</dbReference>
<dbReference type="CDD" id="cd00740">
    <property type="entry name" value="MeTr"/>
    <property type="match status" value="1"/>
</dbReference>
<dbReference type="FunFam" id="1.10.1240.10:FF:000001">
    <property type="entry name" value="Methionine synthase"/>
    <property type="match status" value="1"/>
</dbReference>
<dbReference type="FunFam" id="3.20.20.20:FF:000002">
    <property type="entry name" value="Methionine synthase"/>
    <property type="match status" value="1"/>
</dbReference>
<dbReference type="FunFam" id="3.20.20.330:FF:000001">
    <property type="entry name" value="Methionine synthase"/>
    <property type="match status" value="1"/>
</dbReference>
<dbReference type="FunFam" id="3.40.50.280:FF:000001">
    <property type="entry name" value="Methionine synthase"/>
    <property type="match status" value="1"/>
</dbReference>
<dbReference type="Gene3D" id="3.40.50.280">
    <property type="entry name" value="Cobalamin-binding domain"/>
    <property type="match status" value="1"/>
</dbReference>
<dbReference type="Gene3D" id="1.10.288.10">
    <property type="entry name" value="Cobalamin-dependent Methionine Synthase, domain 2"/>
    <property type="match status" value="1"/>
</dbReference>
<dbReference type="Gene3D" id="3.20.20.20">
    <property type="entry name" value="Dihydropteroate synthase-like"/>
    <property type="match status" value="1"/>
</dbReference>
<dbReference type="Gene3D" id="3.20.20.330">
    <property type="entry name" value="Homocysteine-binding-like domain"/>
    <property type="match status" value="1"/>
</dbReference>
<dbReference type="Gene3D" id="1.10.1240.10">
    <property type="entry name" value="Methionine synthase domain"/>
    <property type="match status" value="1"/>
</dbReference>
<dbReference type="Gene3D" id="3.10.196.10">
    <property type="entry name" value="Vitamin B12-dependent methionine synthase, activation domain"/>
    <property type="match status" value="1"/>
</dbReference>
<dbReference type="InterPro" id="IPR003759">
    <property type="entry name" value="Cbl-bd_cap"/>
</dbReference>
<dbReference type="InterPro" id="IPR006158">
    <property type="entry name" value="Cobalamin-bd"/>
</dbReference>
<dbReference type="InterPro" id="IPR036724">
    <property type="entry name" value="Cobalamin-bd_sf"/>
</dbReference>
<dbReference type="InterPro" id="IPR011005">
    <property type="entry name" value="Dihydropteroate_synth-like_sf"/>
</dbReference>
<dbReference type="InterPro" id="IPR003726">
    <property type="entry name" value="HCY_dom"/>
</dbReference>
<dbReference type="InterPro" id="IPR036589">
    <property type="entry name" value="HCY_dom_sf"/>
</dbReference>
<dbReference type="InterPro" id="IPR050554">
    <property type="entry name" value="Met_Synthase/Corrinoid"/>
</dbReference>
<dbReference type="InterPro" id="IPR033706">
    <property type="entry name" value="Met_synthase_B12-bd"/>
</dbReference>
<dbReference type="InterPro" id="IPR011822">
    <property type="entry name" value="MetH"/>
</dbReference>
<dbReference type="InterPro" id="IPR036594">
    <property type="entry name" value="Meth_synthase_dom"/>
</dbReference>
<dbReference type="InterPro" id="IPR000489">
    <property type="entry name" value="Pterin-binding_dom"/>
</dbReference>
<dbReference type="InterPro" id="IPR004223">
    <property type="entry name" value="VitB12-dep_Met_synth_activ_dom"/>
</dbReference>
<dbReference type="InterPro" id="IPR037010">
    <property type="entry name" value="VitB12-dep_Met_synth_activ_sf"/>
</dbReference>
<dbReference type="NCBIfam" id="TIGR02082">
    <property type="entry name" value="metH"/>
    <property type="match status" value="1"/>
</dbReference>
<dbReference type="NCBIfam" id="NF007024">
    <property type="entry name" value="PRK09490.1"/>
    <property type="match status" value="1"/>
</dbReference>
<dbReference type="PANTHER" id="PTHR45833">
    <property type="entry name" value="METHIONINE SYNTHASE"/>
    <property type="match status" value="1"/>
</dbReference>
<dbReference type="PANTHER" id="PTHR45833:SF1">
    <property type="entry name" value="METHIONINE SYNTHASE"/>
    <property type="match status" value="1"/>
</dbReference>
<dbReference type="Pfam" id="PF02310">
    <property type="entry name" value="B12-binding"/>
    <property type="match status" value="1"/>
</dbReference>
<dbReference type="Pfam" id="PF02607">
    <property type="entry name" value="B12-binding_2"/>
    <property type="match status" value="1"/>
</dbReference>
<dbReference type="Pfam" id="PF02965">
    <property type="entry name" value="Met_synt_B12"/>
    <property type="match status" value="1"/>
</dbReference>
<dbReference type="Pfam" id="PF00809">
    <property type="entry name" value="Pterin_bind"/>
    <property type="match status" value="1"/>
</dbReference>
<dbReference type="Pfam" id="PF02574">
    <property type="entry name" value="S-methyl_trans"/>
    <property type="match status" value="1"/>
</dbReference>
<dbReference type="PIRSF" id="PIRSF000381">
    <property type="entry name" value="MetH"/>
    <property type="match status" value="1"/>
</dbReference>
<dbReference type="SMART" id="SM01018">
    <property type="entry name" value="B12-binding_2"/>
    <property type="match status" value="1"/>
</dbReference>
<dbReference type="SUPFAM" id="SSF52242">
    <property type="entry name" value="Cobalamin (vitamin B12)-binding domain"/>
    <property type="match status" value="1"/>
</dbReference>
<dbReference type="SUPFAM" id="SSF51717">
    <property type="entry name" value="Dihydropteroate synthetase-like"/>
    <property type="match status" value="1"/>
</dbReference>
<dbReference type="SUPFAM" id="SSF82282">
    <property type="entry name" value="Homocysteine S-methyltransferase"/>
    <property type="match status" value="1"/>
</dbReference>
<dbReference type="SUPFAM" id="SSF56507">
    <property type="entry name" value="Methionine synthase activation domain-like"/>
    <property type="match status" value="1"/>
</dbReference>
<dbReference type="SUPFAM" id="SSF47644">
    <property type="entry name" value="Methionine synthase domain"/>
    <property type="match status" value="1"/>
</dbReference>
<dbReference type="PROSITE" id="PS50974">
    <property type="entry name" value="ADOMET_ACTIVATION"/>
    <property type="match status" value="1"/>
</dbReference>
<dbReference type="PROSITE" id="PS51332">
    <property type="entry name" value="B12_BINDING"/>
    <property type="match status" value="1"/>
</dbReference>
<dbReference type="PROSITE" id="PS51337">
    <property type="entry name" value="B12_BINDING_NTER"/>
    <property type="match status" value="1"/>
</dbReference>
<dbReference type="PROSITE" id="PS50970">
    <property type="entry name" value="HCY"/>
    <property type="match status" value="1"/>
</dbReference>
<dbReference type="PROSITE" id="PS50972">
    <property type="entry name" value="PTERIN_BINDING"/>
    <property type="match status" value="1"/>
</dbReference>
<name>METH_VIBCH</name>
<evidence type="ECO:0000250" key="1"/>
<evidence type="ECO:0000250" key="2">
    <source>
        <dbReference type="UniProtKB" id="P13009"/>
    </source>
</evidence>
<evidence type="ECO:0000255" key="3">
    <source>
        <dbReference type="PROSITE-ProRule" id="PRU00333"/>
    </source>
</evidence>
<evidence type="ECO:0000255" key="4">
    <source>
        <dbReference type="PROSITE-ProRule" id="PRU00334"/>
    </source>
</evidence>
<evidence type="ECO:0000255" key="5">
    <source>
        <dbReference type="PROSITE-ProRule" id="PRU00346"/>
    </source>
</evidence>
<evidence type="ECO:0000255" key="6">
    <source>
        <dbReference type="PROSITE-ProRule" id="PRU00666"/>
    </source>
</evidence>
<evidence type="ECO:0000255" key="7">
    <source>
        <dbReference type="PROSITE-ProRule" id="PRU00667"/>
    </source>
</evidence>
<evidence type="ECO:0000305" key="8"/>
<feature type="chain" id="PRO_0000204538" description="Methionine synthase">
    <location>
        <begin position="1"/>
        <end position="1226"/>
    </location>
</feature>
<feature type="domain" description="Hcy-binding" evidence="3">
    <location>
        <begin position="6"/>
        <end position="326"/>
    </location>
</feature>
<feature type="domain" description="Pterin-binding" evidence="4">
    <location>
        <begin position="357"/>
        <end position="618"/>
    </location>
</feature>
<feature type="domain" description="B12-binding N-terminal" evidence="7">
    <location>
        <begin position="651"/>
        <end position="745"/>
    </location>
</feature>
<feature type="domain" description="B12-binding" evidence="6">
    <location>
        <begin position="747"/>
        <end position="882"/>
    </location>
</feature>
<feature type="domain" description="AdoMet activation" evidence="5">
    <location>
        <begin position="898"/>
        <end position="1226"/>
    </location>
</feature>
<feature type="binding site" evidence="3">
    <location>
        <position position="248"/>
    </location>
    <ligand>
        <name>Zn(2+)</name>
        <dbReference type="ChEBI" id="CHEBI:29105"/>
    </ligand>
</feature>
<feature type="binding site" evidence="3">
    <location>
        <position position="311"/>
    </location>
    <ligand>
        <name>Zn(2+)</name>
        <dbReference type="ChEBI" id="CHEBI:29105"/>
    </ligand>
</feature>
<feature type="binding site" evidence="3">
    <location>
        <position position="312"/>
    </location>
    <ligand>
        <name>Zn(2+)</name>
        <dbReference type="ChEBI" id="CHEBI:29105"/>
    </ligand>
</feature>
<feature type="binding site" evidence="2">
    <location>
        <position position="695"/>
    </location>
    <ligand>
        <name>methylcob(III)alamin</name>
        <dbReference type="ChEBI" id="CHEBI:28115"/>
    </ligand>
</feature>
<feature type="binding site" evidence="2">
    <location>
        <begin position="757"/>
        <end position="761"/>
    </location>
    <ligand>
        <name>methylcob(III)alamin</name>
        <dbReference type="ChEBI" id="CHEBI:28115"/>
    </ligand>
</feature>
<feature type="binding site" description="axial binding residue" evidence="2">
    <location>
        <position position="760"/>
    </location>
    <ligand>
        <name>methylcob(III)alamin</name>
        <dbReference type="ChEBI" id="CHEBI:28115"/>
    </ligand>
    <ligandPart>
        <name>Co</name>
        <dbReference type="ChEBI" id="CHEBI:27638"/>
    </ligandPart>
</feature>
<feature type="binding site" evidence="2">
    <location>
        <position position="805"/>
    </location>
    <ligand>
        <name>methylcob(III)alamin</name>
        <dbReference type="ChEBI" id="CHEBI:28115"/>
    </ligand>
</feature>
<feature type="binding site" evidence="2">
    <location>
        <position position="809"/>
    </location>
    <ligand>
        <name>methylcob(III)alamin</name>
        <dbReference type="ChEBI" id="CHEBI:28115"/>
    </ligand>
</feature>
<feature type="binding site" evidence="2">
    <location>
        <position position="861"/>
    </location>
    <ligand>
        <name>methylcob(III)alamin</name>
        <dbReference type="ChEBI" id="CHEBI:28115"/>
    </ligand>
</feature>
<feature type="binding site" evidence="1">
    <location>
        <position position="948"/>
    </location>
    <ligand>
        <name>S-adenosyl-L-methionine</name>
        <dbReference type="ChEBI" id="CHEBI:59789"/>
    </ligand>
</feature>
<feature type="binding site" evidence="1">
    <location>
        <position position="1136"/>
    </location>
    <ligand>
        <name>S-adenosyl-L-methionine</name>
        <dbReference type="ChEBI" id="CHEBI:59789"/>
    </ligand>
</feature>
<feature type="binding site" evidence="1">
    <location>
        <begin position="1191"/>
        <end position="1192"/>
    </location>
    <ligand>
        <name>S-adenosyl-L-methionine</name>
        <dbReference type="ChEBI" id="CHEBI:59789"/>
    </ligand>
</feature>